<accession>P53471</accession>
<protein>
    <recommendedName>
        <fullName>Actin-2</fullName>
        <ecNumber evidence="1">3.6.4.-</ecNumber>
    </recommendedName>
</protein>
<sequence>MADEEVQALVVDNGSGMCKAGFAGDDAPRAVFPSIVGRPRHQGVMVGMGQKDSYVGDEAQSKRGILTLKYPIEHGIVTNWDDMEKIWHHTFYNELRVAPEEHPVLLTEAPLNPKANREKMTQIMFETFNTPAMYVGIQAVLSLYASGRTTGIVLDSGDGVTHTVPIYEGYALPHAILRLDLAGRDLTDYLMKILTERGYSFTTTAEREIVRDIKEKLCYVALDFEQEMATAASSSSLEKSYELPDGQVITIGNERFRCPEALFQPSFLGMESAGVHETTFNSIMKCDVDIRKDLYANTVLSGGTTMFPGIADRMQKEITALAPSTMKIKIVAPPERKYSVWIGGSILASLSTFQQMWISKQEYDESGPGIVHRKCF</sequence>
<proteinExistence type="evidence at transcript level"/>
<keyword id="KW-0067">ATP-binding</keyword>
<keyword id="KW-0963">Cytoplasm</keyword>
<keyword id="KW-0206">Cytoskeleton</keyword>
<keyword id="KW-0378">Hydrolase</keyword>
<keyword id="KW-0547">Nucleotide-binding</keyword>
<keyword id="KW-1185">Reference proteome</keyword>
<evidence type="ECO:0000250" key="1">
    <source>
        <dbReference type="UniProtKB" id="P68137"/>
    </source>
</evidence>
<evidence type="ECO:0000305" key="2"/>
<dbReference type="EC" id="3.6.4.-" evidence="1"/>
<dbReference type="EMBL" id="U19945">
    <property type="protein sequence ID" value="AAC46966.1"/>
    <property type="molecule type" value="mRNA"/>
</dbReference>
<dbReference type="SMR" id="P53471"/>
<dbReference type="FunCoup" id="P53471">
    <property type="interactions" value="1284"/>
</dbReference>
<dbReference type="STRING" id="6183.P53471"/>
<dbReference type="EnsemblMetazoa" id="Smp_307010.1">
    <property type="protein sequence ID" value="Smp_307010.1"/>
    <property type="gene ID" value="Smp_307010"/>
</dbReference>
<dbReference type="EnsemblMetazoa" id="Smp_307020.1">
    <property type="protein sequence ID" value="Smp_307020.1"/>
    <property type="gene ID" value="Smp_307020"/>
</dbReference>
<dbReference type="WBParaSite" id="Smp_307010.1">
    <property type="protein sequence ID" value="Smp_307010.1"/>
    <property type="gene ID" value="Smp_307010"/>
</dbReference>
<dbReference type="WBParaSite" id="Smp_307020.1">
    <property type="protein sequence ID" value="Smp_307020.1"/>
    <property type="gene ID" value="Smp_307020"/>
</dbReference>
<dbReference type="HOGENOM" id="CLU_027965_0_2_1"/>
<dbReference type="InParanoid" id="P53471"/>
<dbReference type="OMA" id="GKEACGI"/>
<dbReference type="PhylomeDB" id="P53471"/>
<dbReference type="Proteomes" id="UP000008854">
    <property type="component" value="Unassembled WGS sequence"/>
</dbReference>
<dbReference type="ExpressionAtlas" id="P53471">
    <property type="expression patterns" value="baseline and differential"/>
</dbReference>
<dbReference type="GO" id="GO:0005737">
    <property type="term" value="C:cytoplasm"/>
    <property type="evidence" value="ECO:0007669"/>
    <property type="project" value="UniProtKB-KW"/>
</dbReference>
<dbReference type="GO" id="GO:0005856">
    <property type="term" value="C:cytoskeleton"/>
    <property type="evidence" value="ECO:0007669"/>
    <property type="project" value="UniProtKB-SubCell"/>
</dbReference>
<dbReference type="GO" id="GO:0005524">
    <property type="term" value="F:ATP binding"/>
    <property type="evidence" value="ECO:0007669"/>
    <property type="project" value="UniProtKB-KW"/>
</dbReference>
<dbReference type="GO" id="GO:0016787">
    <property type="term" value="F:hydrolase activity"/>
    <property type="evidence" value="ECO:0007669"/>
    <property type="project" value="UniProtKB-KW"/>
</dbReference>
<dbReference type="CDD" id="cd10224">
    <property type="entry name" value="ASKHA_NBD_actin"/>
    <property type="match status" value="1"/>
</dbReference>
<dbReference type="FunFam" id="3.30.420.40:FF:000131">
    <property type="entry name" value="Actin, alpha skeletal muscle"/>
    <property type="match status" value="1"/>
</dbReference>
<dbReference type="FunFam" id="3.30.420.40:FF:000291">
    <property type="entry name" value="Actin, alpha skeletal muscle"/>
    <property type="match status" value="1"/>
</dbReference>
<dbReference type="FunFam" id="3.90.640.10:FF:000047">
    <property type="entry name" value="Actin, alpha skeletal muscle"/>
    <property type="match status" value="1"/>
</dbReference>
<dbReference type="FunFam" id="3.30.420.40:FF:000058">
    <property type="entry name" value="Putative actin-related protein 5"/>
    <property type="match status" value="1"/>
</dbReference>
<dbReference type="Gene3D" id="3.30.420.40">
    <property type="match status" value="2"/>
</dbReference>
<dbReference type="Gene3D" id="3.90.640.10">
    <property type="entry name" value="Actin, Chain A, domain 4"/>
    <property type="match status" value="1"/>
</dbReference>
<dbReference type="InterPro" id="IPR004000">
    <property type="entry name" value="Actin"/>
</dbReference>
<dbReference type="InterPro" id="IPR020902">
    <property type="entry name" value="Actin/actin-like_CS"/>
</dbReference>
<dbReference type="InterPro" id="IPR004001">
    <property type="entry name" value="Actin_CS"/>
</dbReference>
<dbReference type="InterPro" id="IPR043129">
    <property type="entry name" value="ATPase_NBD"/>
</dbReference>
<dbReference type="PANTHER" id="PTHR11937">
    <property type="entry name" value="ACTIN"/>
    <property type="match status" value="1"/>
</dbReference>
<dbReference type="Pfam" id="PF00022">
    <property type="entry name" value="Actin"/>
    <property type="match status" value="1"/>
</dbReference>
<dbReference type="PRINTS" id="PR00190">
    <property type="entry name" value="ACTIN"/>
</dbReference>
<dbReference type="SMART" id="SM00268">
    <property type="entry name" value="ACTIN"/>
    <property type="match status" value="1"/>
</dbReference>
<dbReference type="SUPFAM" id="SSF53067">
    <property type="entry name" value="Actin-like ATPase domain"/>
    <property type="match status" value="2"/>
</dbReference>
<dbReference type="PROSITE" id="PS00406">
    <property type="entry name" value="ACTINS_1"/>
    <property type="match status" value="1"/>
</dbReference>
<dbReference type="PROSITE" id="PS00432">
    <property type="entry name" value="ACTINS_2"/>
    <property type="match status" value="1"/>
</dbReference>
<dbReference type="PROSITE" id="PS01132">
    <property type="entry name" value="ACTINS_ACT_LIKE"/>
    <property type="match status" value="1"/>
</dbReference>
<name>ACT2_SCHMA</name>
<organism>
    <name type="scientific">Schistosoma mansoni</name>
    <name type="common">Blood fluke</name>
    <dbReference type="NCBI Taxonomy" id="6183"/>
    <lineage>
        <taxon>Eukaryota</taxon>
        <taxon>Metazoa</taxon>
        <taxon>Spiralia</taxon>
        <taxon>Lophotrochozoa</taxon>
        <taxon>Platyhelminthes</taxon>
        <taxon>Trematoda</taxon>
        <taxon>Digenea</taxon>
        <taxon>Strigeidida</taxon>
        <taxon>Schistosomatoidea</taxon>
        <taxon>Schistosomatidae</taxon>
        <taxon>Schistosoma</taxon>
    </lineage>
</organism>
<comment type="function">
    <text>Actins are highly conserved proteins that are involved in various types of cell motility and are ubiquitously expressed in all eukaryotic cells.</text>
</comment>
<comment type="catalytic activity">
    <reaction evidence="1">
        <text>ATP + H2O = ADP + phosphate + H(+)</text>
        <dbReference type="Rhea" id="RHEA:13065"/>
        <dbReference type="ChEBI" id="CHEBI:15377"/>
        <dbReference type="ChEBI" id="CHEBI:15378"/>
        <dbReference type="ChEBI" id="CHEBI:30616"/>
        <dbReference type="ChEBI" id="CHEBI:43474"/>
        <dbReference type="ChEBI" id="CHEBI:456216"/>
    </reaction>
</comment>
<comment type="subcellular location">
    <subcellularLocation>
        <location>Cytoplasm</location>
        <location>Cytoskeleton</location>
    </subcellularLocation>
</comment>
<comment type="similarity">
    <text evidence="2">Belongs to the actin family.</text>
</comment>
<feature type="chain" id="PRO_0000089006" description="Actin-2">
    <location>
        <begin position="1"/>
        <end position="376"/>
    </location>
</feature>
<reference key="1">
    <citation type="journal article" date="1995" name="Mol. Biochem. Parasitol.">
        <title>Cloning of two actin genes from Schistosoma mansoni.</title>
        <authorList>
            <person name="Oliveira G.C."/>
            <person name="Kemp W.M."/>
        </authorList>
    </citation>
    <scope>NUCLEOTIDE SEQUENCE [MRNA]</scope>
    <source>
        <strain>LE</strain>
    </source>
</reference>